<organism evidence="7">
    <name type="scientific">Caenorhabditis elegans</name>
    <dbReference type="NCBI Taxonomy" id="6239"/>
    <lineage>
        <taxon>Eukaryota</taxon>
        <taxon>Metazoa</taxon>
        <taxon>Ecdysozoa</taxon>
        <taxon>Nematoda</taxon>
        <taxon>Chromadorea</taxon>
        <taxon>Rhabditida</taxon>
        <taxon>Rhabditina</taxon>
        <taxon>Rhabditomorpha</taxon>
        <taxon>Rhabditoidea</taxon>
        <taxon>Rhabditidae</taxon>
        <taxon>Peloderinae</taxon>
        <taxon>Caenorhabditis</taxon>
    </lineage>
</organism>
<accession>H2L0N3</accession>
<accession>G4SR45</accession>
<accession>Q965I4</accession>
<sequence>MYNYNYSRGNKSMGNPPRFHELTDMPDNGASTSAAAGMFTRQDSLALAASLQQRDRERNPVDFMETQLDLDNYLQCFTDLDVPADNVDLNDAELQKANILYDDDSYEQPQLNPYERHVAYGPGFRNPGEYEEQDGYKMNFEVKTEEEKKPETMKTSKTMTTRRAIKRPSCYDDYQEEGETSLSDNDESVDDSYYKPKSSKKTAAAVPNFVPKTKARKYNLKPDKEKVEPIYKLKRARNNDAVRKSRNKAKELQLQKDEEYDEMKKRITQLEAELQSEREGRERDQQLIKQLIREKESTSKGPRKSSRNALESFNKSNY</sequence>
<protein>
    <recommendedName>
        <fullName evidence="6">Transcription factor zip-4</fullName>
    </recommendedName>
</protein>
<reference evidence="7" key="1">
    <citation type="journal article" date="1998" name="Science">
        <title>Genome sequence of the nematode C. elegans: a platform for investigating biology.</title>
        <authorList>
            <consortium name="The C. elegans sequencing consortium"/>
        </authorList>
    </citation>
    <scope>NUCLEOTIDE SEQUENCE [LARGE SCALE GENOMIC DNA]</scope>
    <source>
        <strain evidence="7">Bristol N2</strain>
    </source>
</reference>
<reference evidence="6" key="2">
    <citation type="journal article" date="2017" name="PLoS Genet.">
        <title>A conserved mitochondrial surveillance pathway is required for defense against Pseudomonas aeruginosa.</title>
        <authorList>
            <person name="Tjahjono E."/>
            <person name="Kirienko N.V."/>
        </authorList>
    </citation>
    <scope>FUNCTION</scope>
    <scope>DISRUPTION PHENOTYPE</scope>
</reference>
<dbReference type="EMBL" id="BX284601">
    <property type="protein sequence ID" value="CCD73448.1"/>
    <property type="molecule type" value="Genomic_DNA"/>
</dbReference>
<dbReference type="EMBL" id="BX284601">
    <property type="protein sequence ID" value="CCD73449.1"/>
    <property type="molecule type" value="Genomic_DNA"/>
</dbReference>
<dbReference type="EMBL" id="BX284601">
    <property type="protein sequence ID" value="CCD73450.1"/>
    <property type="molecule type" value="Genomic_DNA"/>
</dbReference>
<dbReference type="RefSeq" id="NP_001040703.1">
    <molecule id="H2L0N3-3"/>
    <property type="nucleotide sequence ID" value="NM_001047238.7"/>
</dbReference>
<dbReference type="RefSeq" id="NP_001368002.1">
    <molecule id="H2L0N3-1"/>
    <property type="nucleotide sequence ID" value="NM_001381600.2"/>
</dbReference>
<dbReference type="RefSeq" id="NP_491132.1">
    <property type="nucleotide sequence ID" value="NM_058731.3"/>
</dbReference>
<dbReference type="RefSeq" id="NP_491133.1">
    <molecule id="H2L0N3-2"/>
    <property type="nucleotide sequence ID" value="NM_058732.5"/>
</dbReference>
<dbReference type="SMR" id="H2L0N3"/>
<dbReference type="FunCoup" id="H2L0N3">
    <property type="interactions" value="95"/>
</dbReference>
<dbReference type="IntAct" id="H2L0N3">
    <property type="interactions" value="1"/>
</dbReference>
<dbReference type="STRING" id="6239.Y44E3B.1a.1"/>
<dbReference type="PaxDb" id="6239-Y44E3B.1a.1"/>
<dbReference type="EnsemblMetazoa" id="Y44E3B.1a.1">
    <molecule id="H2L0N3-1"/>
    <property type="protein sequence ID" value="Y44E3B.1a.1"/>
    <property type="gene ID" value="WBGene00021552"/>
</dbReference>
<dbReference type="EnsemblMetazoa" id="Y44E3B.1a.2">
    <molecule id="H2L0N3-1"/>
    <property type="protein sequence ID" value="Y44E3B.1a.2"/>
    <property type="gene ID" value="WBGene00021552"/>
</dbReference>
<dbReference type="EnsemblMetazoa" id="Y44E3B.1b.1">
    <molecule id="H2L0N3-2"/>
    <property type="protein sequence ID" value="Y44E3B.1b.1"/>
    <property type="gene ID" value="WBGene00021552"/>
</dbReference>
<dbReference type="EnsemblMetazoa" id="Y44E3B.1b.2">
    <molecule id="H2L0N3-2"/>
    <property type="protein sequence ID" value="Y44E3B.1b.2"/>
    <property type="gene ID" value="WBGene00021552"/>
</dbReference>
<dbReference type="EnsemblMetazoa" id="Y44E3B.1c.1">
    <molecule id="H2L0N3-3"/>
    <property type="protein sequence ID" value="Y44E3B.1c.1"/>
    <property type="gene ID" value="WBGene00021552"/>
</dbReference>
<dbReference type="GeneID" id="171900"/>
<dbReference type="KEGG" id="cel:CELE_Y44E3B.1"/>
<dbReference type="UCSC" id="Y44E3B.1b.2">
    <property type="organism name" value="c. elegans"/>
</dbReference>
<dbReference type="AGR" id="WB:WBGene00021552"/>
<dbReference type="CTD" id="171900"/>
<dbReference type="WormBase" id="Y44E3B.1a">
    <molecule id="H2L0N3-1"/>
    <property type="protein sequence ID" value="CE18390"/>
    <property type="gene ID" value="WBGene00021552"/>
    <property type="gene designation" value="zip-4"/>
</dbReference>
<dbReference type="WormBase" id="Y44E3B.1b">
    <molecule id="H2L0N3-2"/>
    <property type="protein sequence ID" value="CE28364"/>
    <property type="gene ID" value="WBGene00021552"/>
    <property type="gene designation" value="zip-4"/>
</dbReference>
<dbReference type="WormBase" id="Y44E3B.1c">
    <molecule id="H2L0N3-3"/>
    <property type="protein sequence ID" value="CE39837"/>
    <property type="gene ID" value="WBGene00021552"/>
    <property type="gene designation" value="zip-4"/>
</dbReference>
<dbReference type="eggNOG" id="KOG3119">
    <property type="taxonomic scope" value="Eukaryota"/>
</dbReference>
<dbReference type="GeneTree" id="ENSGT00940000171291"/>
<dbReference type="HOGENOM" id="CLU_075902_0_0_1"/>
<dbReference type="InParanoid" id="H2L0N3"/>
<dbReference type="OMA" id="SHNDCIS"/>
<dbReference type="OrthoDB" id="10039716at2759"/>
<dbReference type="PRO" id="PR:H2L0N3"/>
<dbReference type="Proteomes" id="UP000001940">
    <property type="component" value="Chromosome I"/>
</dbReference>
<dbReference type="Bgee" id="WBGene00021552">
    <property type="expression patterns" value="Expressed in germ line (C elegans) and 4 other cell types or tissues"/>
</dbReference>
<dbReference type="ExpressionAtlas" id="H2L0N3">
    <property type="expression patterns" value="baseline and differential"/>
</dbReference>
<dbReference type="GO" id="GO:0005634">
    <property type="term" value="C:nucleus"/>
    <property type="evidence" value="ECO:0007669"/>
    <property type="project" value="UniProtKB-SubCell"/>
</dbReference>
<dbReference type="GO" id="GO:0000981">
    <property type="term" value="F:DNA-binding transcription factor activity, RNA polymerase II-specific"/>
    <property type="evidence" value="ECO:0000318"/>
    <property type="project" value="GO_Central"/>
</dbReference>
<dbReference type="GO" id="GO:0000978">
    <property type="term" value="F:RNA polymerase II cis-regulatory region sequence-specific DNA binding"/>
    <property type="evidence" value="ECO:0000318"/>
    <property type="project" value="GO_Central"/>
</dbReference>
<dbReference type="GO" id="GO:0050829">
    <property type="term" value="P:defense response to Gram-negative bacterium"/>
    <property type="evidence" value="ECO:0000315"/>
    <property type="project" value="UniProtKB"/>
</dbReference>
<dbReference type="GO" id="GO:0006351">
    <property type="term" value="P:DNA-templated transcription"/>
    <property type="evidence" value="ECO:0007669"/>
    <property type="project" value="InterPro"/>
</dbReference>
<dbReference type="GO" id="GO:0006357">
    <property type="term" value="P:regulation of transcription by RNA polymerase II"/>
    <property type="evidence" value="ECO:0000318"/>
    <property type="project" value="GO_Central"/>
</dbReference>
<dbReference type="Gene3D" id="1.20.5.170">
    <property type="match status" value="1"/>
</dbReference>
<dbReference type="InterPro" id="IPR004827">
    <property type="entry name" value="bZIP"/>
</dbReference>
<dbReference type="InterPro" id="IPR046347">
    <property type="entry name" value="bZIP_sf"/>
</dbReference>
<dbReference type="InterPro" id="IPR031106">
    <property type="entry name" value="C/EBP"/>
</dbReference>
<dbReference type="PANTHER" id="PTHR23334">
    <property type="entry name" value="CCAAT/ENHANCER BINDING PROTEIN"/>
    <property type="match status" value="1"/>
</dbReference>
<dbReference type="PANTHER" id="PTHR23334:SF43">
    <property type="entry name" value="CCAAT_ENHANCER-BINDING PROTEIN HOMOLOG 1-RELATED"/>
    <property type="match status" value="1"/>
</dbReference>
<dbReference type="Pfam" id="PF07716">
    <property type="entry name" value="bZIP_2"/>
    <property type="match status" value="1"/>
</dbReference>
<dbReference type="SUPFAM" id="SSF57959">
    <property type="entry name" value="Leucine zipper domain"/>
    <property type="match status" value="1"/>
</dbReference>
<keyword id="KW-0025">Alternative splicing</keyword>
<keyword id="KW-0175">Coiled coil</keyword>
<keyword id="KW-0238">DNA-binding</keyword>
<keyword id="KW-0539">Nucleus</keyword>
<keyword id="KW-1185">Reference proteome</keyword>
<keyword id="KW-0804">Transcription</keyword>
<keyword id="KW-0805">Transcription regulation</keyword>
<evidence type="ECO:0000250" key="1">
    <source>
        <dbReference type="UniProtKB" id="P53567"/>
    </source>
</evidence>
<evidence type="ECO:0000255" key="2"/>
<evidence type="ECO:0000255" key="3">
    <source>
        <dbReference type="PROSITE-ProRule" id="PRU00978"/>
    </source>
</evidence>
<evidence type="ECO:0000256" key="4">
    <source>
        <dbReference type="SAM" id="MobiDB-lite"/>
    </source>
</evidence>
<evidence type="ECO:0000269" key="5">
    <source>
    </source>
</evidence>
<evidence type="ECO:0000305" key="6"/>
<evidence type="ECO:0000312" key="7">
    <source>
        <dbReference type="Proteomes" id="UP000001940"/>
    </source>
</evidence>
<evidence type="ECO:0000312" key="8">
    <source>
        <dbReference type="WormBase" id="Y44E3B.1a"/>
    </source>
</evidence>
<evidence type="ECO:0000312" key="9">
    <source>
        <dbReference type="WormBase" id="Y44E3B.1b"/>
    </source>
</evidence>
<evidence type="ECO:0000312" key="10">
    <source>
        <dbReference type="WormBase" id="Y44E3B.1c"/>
    </source>
</evidence>
<name>ZIP4_CAEEL</name>
<comment type="function">
    <text evidence="1 5">Transcription factor that binds to the promoter and the enhancer regions of target genes (By similarity). Involved in responding to mitochondrial damage (PubMed:28662060). Has a protective role in response to infection by the Gram-negative bacterium P.aeruginosa (PubMed:28662060).</text>
</comment>
<comment type="interaction">
    <interactant intactId="EBI-6777775">
        <id>H2L0N3</id>
    </interactant>
    <interactant intactId="EBI-326791">
        <id>Q18909</id>
        <label>cebp-1</label>
    </interactant>
    <organismsDiffer>false</organismsDiffer>
    <experiments>2</experiments>
</comment>
<comment type="subcellular location">
    <subcellularLocation>
        <location evidence="3">Nucleus</location>
    </subcellularLocation>
</comment>
<comment type="alternative products">
    <event type="alternative splicing"/>
    <isoform>
        <id>H2L0N3-1</id>
        <name evidence="8">a</name>
        <sequence type="displayed"/>
    </isoform>
    <isoform>
        <id>H2L0N3-2</id>
        <name evidence="9">b</name>
        <sequence type="described" ref="VSP_061054"/>
    </isoform>
    <isoform>
        <id>H2L0N3-3</id>
        <name evidence="10">c</name>
        <sequence type="described" ref="VSP_061053"/>
    </isoform>
</comment>
<comment type="disruption phenotype">
    <text evidence="5">RNAi-mediated knockdown decreases survival upon infection with P.aeruginosa.</text>
</comment>
<comment type="similarity">
    <text evidence="6">Belongs to the bZIP family. C/EBP subfamily.</text>
</comment>
<proteinExistence type="evidence at protein level"/>
<gene>
    <name evidence="8" type="primary">zip-4</name>
    <name evidence="8" type="ORF">Y44E3B.1</name>
</gene>
<feature type="chain" id="PRO_0000452748" description="Transcription factor zip-4">
    <location>
        <begin position="1"/>
        <end position="318"/>
    </location>
</feature>
<feature type="domain" description="bZIP" evidence="3">
    <location>
        <begin position="228"/>
        <end position="291"/>
    </location>
</feature>
<feature type="region of interest" description="Disordered" evidence="4">
    <location>
        <begin position="1"/>
        <end position="20"/>
    </location>
</feature>
<feature type="region of interest" description="Disordered" evidence="4">
    <location>
        <begin position="147"/>
        <end position="205"/>
    </location>
</feature>
<feature type="region of interest" description="Basic motif" evidence="3">
    <location>
        <begin position="232"/>
        <end position="266"/>
    </location>
</feature>
<feature type="region of interest" description="Disordered" evidence="4">
    <location>
        <begin position="238"/>
        <end position="257"/>
    </location>
</feature>
<feature type="region of interest" description="Leucine-zipper" evidence="3">
    <location>
        <begin position="267"/>
        <end position="274"/>
    </location>
</feature>
<feature type="region of interest" description="Disordered" evidence="4">
    <location>
        <begin position="273"/>
        <end position="318"/>
    </location>
</feature>
<feature type="coiled-coil region" evidence="2">
    <location>
        <begin position="242"/>
        <end position="280"/>
    </location>
</feature>
<feature type="compositionally biased region" description="Polar residues" evidence="4">
    <location>
        <begin position="1"/>
        <end position="13"/>
    </location>
</feature>
<feature type="compositionally biased region" description="Acidic residues" evidence="4">
    <location>
        <begin position="173"/>
        <end position="190"/>
    </location>
</feature>
<feature type="compositionally biased region" description="Basic and acidic residues" evidence="4">
    <location>
        <begin position="275"/>
        <end position="298"/>
    </location>
</feature>
<feature type="compositionally biased region" description="Polar residues" evidence="4">
    <location>
        <begin position="307"/>
        <end position="318"/>
    </location>
</feature>
<feature type="splice variant" id="VSP_061053" description="In isoform c." evidence="6">
    <location>
        <begin position="1"/>
        <end position="63"/>
    </location>
</feature>
<feature type="splice variant" id="VSP_061054" description="In isoform b." evidence="6">
    <location>
        <begin position="296"/>
        <end position="318"/>
    </location>
</feature>